<proteinExistence type="inferred from homology"/>
<name>NFUA_SHIDS</name>
<organism>
    <name type="scientific">Shigella dysenteriae serotype 1 (strain Sd197)</name>
    <dbReference type="NCBI Taxonomy" id="300267"/>
    <lineage>
        <taxon>Bacteria</taxon>
        <taxon>Pseudomonadati</taxon>
        <taxon>Pseudomonadota</taxon>
        <taxon>Gammaproteobacteria</taxon>
        <taxon>Enterobacterales</taxon>
        <taxon>Enterobacteriaceae</taxon>
        <taxon>Shigella</taxon>
    </lineage>
</organism>
<gene>
    <name evidence="1" type="primary">nfuA</name>
    <name type="synonym">yhgI</name>
    <name type="ordered locus">SDY_3662</name>
</gene>
<evidence type="ECO:0000255" key="1">
    <source>
        <dbReference type="HAMAP-Rule" id="MF_01637"/>
    </source>
</evidence>
<comment type="function">
    <text evidence="1">Involved in iron-sulfur cluster biogenesis. Binds a 4Fe-4S cluster, can transfer this cluster to apoproteins, and thereby intervenes in the maturation of Fe/S proteins. Could also act as a scaffold/chaperone for damaged Fe/S proteins.</text>
</comment>
<comment type="cofactor">
    <cofactor evidence="1">
        <name>[4Fe-4S] cluster</name>
        <dbReference type="ChEBI" id="CHEBI:49883"/>
    </cofactor>
    <text evidence="1">Binds 1 [4Fe-4S] cluster per subunit. The cluster is presumably bound at the interface of two monomers.</text>
</comment>
<comment type="subunit">
    <text evidence="1">Homodimer.</text>
</comment>
<comment type="similarity">
    <text evidence="1">Belongs to the NfuA family.</text>
</comment>
<feature type="chain" id="PRO_0000268244" description="Fe/S biogenesis protein NfuA">
    <location>
        <begin position="1"/>
        <end position="191"/>
    </location>
</feature>
<feature type="binding site" evidence="1">
    <location>
        <position position="149"/>
    </location>
    <ligand>
        <name>[4Fe-4S] cluster</name>
        <dbReference type="ChEBI" id="CHEBI:49883"/>
    </ligand>
</feature>
<feature type="binding site" evidence="1">
    <location>
        <position position="152"/>
    </location>
    <ligand>
        <name>[4Fe-4S] cluster</name>
        <dbReference type="ChEBI" id="CHEBI:49883"/>
    </ligand>
</feature>
<accession>Q32AM7</accession>
<reference key="1">
    <citation type="journal article" date="2005" name="Nucleic Acids Res.">
        <title>Genome dynamics and diversity of Shigella species, the etiologic agents of bacillary dysentery.</title>
        <authorList>
            <person name="Yang F."/>
            <person name="Yang J."/>
            <person name="Zhang X."/>
            <person name="Chen L."/>
            <person name="Jiang Y."/>
            <person name="Yan Y."/>
            <person name="Tang X."/>
            <person name="Wang J."/>
            <person name="Xiong Z."/>
            <person name="Dong J."/>
            <person name="Xue Y."/>
            <person name="Zhu Y."/>
            <person name="Xu X."/>
            <person name="Sun L."/>
            <person name="Chen S."/>
            <person name="Nie H."/>
            <person name="Peng J."/>
            <person name="Xu J."/>
            <person name="Wang Y."/>
            <person name="Yuan Z."/>
            <person name="Wen Y."/>
            <person name="Yao Z."/>
            <person name="Shen Y."/>
            <person name="Qiang B."/>
            <person name="Hou Y."/>
            <person name="Yu J."/>
            <person name="Jin Q."/>
        </authorList>
    </citation>
    <scope>NUCLEOTIDE SEQUENCE [LARGE SCALE GENOMIC DNA]</scope>
    <source>
        <strain>Sd197</strain>
    </source>
</reference>
<keyword id="KW-0004">4Fe-4S</keyword>
<keyword id="KW-0408">Iron</keyword>
<keyword id="KW-0411">Iron-sulfur</keyword>
<keyword id="KW-0479">Metal-binding</keyword>
<keyword id="KW-1185">Reference proteome</keyword>
<dbReference type="EMBL" id="CP000034">
    <property type="protein sequence ID" value="ABB63628.1"/>
    <property type="molecule type" value="Genomic_DNA"/>
</dbReference>
<dbReference type="RefSeq" id="WP_000619389.1">
    <property type="nucleotide sequence ID" value="NC_007606.1"/>
</dbReference>
<dbReference type="RefSeq" id="YP_405119.1">
    <property type="nucleotide sequence ID" value="NC_007606.1"/>
</dbReference>
<dbReference type="SMR" id="Q32AM7"/>
<dbReference type="STRING" id="300267.SDY_3662"/>
<dbReference type="EnsemblBacteria" id="ABB63628">
    <property type="protein sequence ID" value="ABB63628"/>
    <property type="gene ID" value="SDY_3662"/>
</dbReference>
<dbReference type="GeneID" id="93778582"/>
<dbReference type="KEGG" id="sdy:SDY_3662"/>
<dbReference type="PATRIC" id="fig|300267.13.peg.4344"/>
<dbReference type="HOGENOM" id="CLU_094569_0_0_6"/>
<dbReference type="Proteomes" id="UP000002716">
    <property type="component" value="Chromosome"/>
</dbReference>
<dbReference type="GO" id="GO:0051539">
    <property type="term" value="F:4 iron, 4 sulfur cluster binding"/>
    <property type="evidence" value="ECO:0007669"/>
    <property type="project" value="UniProtKB-UniRule"/>
</dbReference>
<dbReference type="GO" id="GO:0005506">
    <property type="term" value="F:iron ion binding"/>
    <property type="evidence" value="ECO:0007669"/>
    <property type="project" value="InterPro"/>
</dbReference>
<dbReference type="GO" id="GO:0016226">
    <property type="term" value="P:iron-sulfur cluster assembly"/>
    <property type="evidence" value="ECO:0007669"/>
    <property type="project" value="UniProtKB-UniRule"/>
</dbReference>
<dbReference type="GO" id="GO:0051604">
    <property type="term" value="P:protein maturation"/>
    <property type="evidence" value="ECO:0007669"/>
    <property type="project" value="UniProtKB-UniRule"/>
</dbReference>
<dbReference type="FunFam" id="2.60.300.12:FF:000004">
    <property type="entry name" value="Fe/S biogenesis protein NfuA"/>
    <property type="match status" value="1"/>
</dbReference>
<dbReference type="FunFam" id="3.30.300.130:FF:000002">
    <property type="entry name" value="Fe/S biogenesis protein NfuA"/>
    <property type="match status" value="1"/>
</dbReference>
<dbReference type="Gene3D" id="3.30.300.130">
    <property type="entry name" value="Fe-S cluster assembly (FSCA)"/>
    <property type="match status" value="1"/>
</dbReference>
<dbReference type="Gene3D" id="2.60.300.12">
    <property type="entry name" value="HesB-like domain"/>
    <property type="match status" value="1"/>
</dbReference>
<dbReference type="HAMAP" id="MF_01637">
    <property type="entry name" value="Fe_S_biogen_NfuA"/>
    <property type="match status" value="1"/>
</dbReference>
<dbReference type="InterPro" id="IPR017726">
    <property type="entry name" value="Fe/S_biogenesis_protein_NfuA"/>
</dbReference>
<dbReference type="InterPro" id="IPR000361">
    <property type="entry name" value="FeS_biogenesis"/>
</dbReference>
<dbReference type="InterPro" id="IPR034904">
    <property type="entry name" value="FSCA_dom_sf"/>
</dbReference>
<dbReference type="InterPro" id="IPR035903">
    <property type="entry name" value="HesB-like_dom_sf"/>
</dbReference>
<dbReference type="InterPro" id="IPR001075">
    <property type="entry name" value="NIF_FeS_clus_asmbl_NifU_C"/>
</dbReference>
<dbReference type="NCBIfam" id="NF008392">
    <property type="entry name" value="PRK11190.1"/>
    <property type="match status" value="1"/>
</dbReference>
<dbReference type="NCBIfam" id="TIGR03341">
    <property type="entry name" value="YhgI_GntY"/>
    <property type="match status" value="1"/>
</dbReference>
<dbReference type="PANTHER" id="PTHR11178:SF51">
    <property type="entry name" value="FE_S BIOGENESIS PROTEIN NFUA"/>
    <property type="match status" value="1"/>
</dbReference>
<dbReference type="PANTHER" id="PTHR11178">
    <property type="entry name" value="IRON-SULFUR CLUSTER SCAFFOLD PROTEIN NFU-RELATED"/>
    <property type="match status" value="1"/>
</dbReference>
<dbReference type="Pfam" id="PF01521">
    <property type="entry name" value="Fe-S_biosyn"/>
    <property type="match status" value="1"/>
</dbReference>
<dbReference type="Pfam" id="PF01106">
    <property type="entry name" value="NifU"/>
    <property type="match status" value="1"/>
</dbReference>
<dbReference type="SUPFAM" id="SSF117916">
    <property type="entry name" value="Fe-S cluster assembly (FSCA) domain-like"/>
    <property type="match status" value="1"/>
</dbReference>
<dbReference type="SUPFAM" id="SSF89360">
    <property type="entry name" value="HesB-like domain"/>
    <property type="match status" value="1"/>
</dbReference>
<protein>
    <recommendedName>
        <fullName evidence="1">Fe/S biogenesis protein NfuA</fullName>
    </recommendedName>
</protein>
<sequence>MIRISDAAQAHFAKLLANQEEGTQIRVFVINPGTPNAECGVSYCPPDAVEATDTALKFDLLTAYVDELSAPYLEDAEIDFVTDQLGSQLTLKAPNAKMRKVADDAPLMERVEYMLQSQINPQLAGHGGRVSLMEITEDGYAILQFGGGCNGCSMVDVTLKEGIEKQLLNEFPELKGVRDLTEHQRGEHSYY</sequence>